<reference key="1">
    <citation type="journal article" date="2003" name="Science">
        <title>Genome of Geobacter sulfurreducens: metal reduction in subsurface environments.</title>
        <authorList>
            <person name="Methe B.A."/>
            <person name="Nelson K.E."/>
            <person name="Eisen J.A."/>
            <person name="Paulsen I.T."/>
            <person name="Nelson W.C."/>
            <person name="Heidelberg J.F."/>
            <person name="Wu D."/>
            <person name="Wu M."/>
            <person name="Ward N.L."/>
            <person name="Beanan M.J."/>
            <person name="Dodson R.J."/>
            <person name="Madupu R."/>
            <person name="Brinkac L.M."/>
            <person name="Daugherty S.C."/>
            <person name="DeBoy R.T."/>
            <person name="Durkin A.S."/>
            <person name="Gwinn M.L."/>
            <person name="Kolonay J.F."/>
            <person name="Sullivan S.A."/>
            <person name="Haft D.H."/>
            <person name="Selengut J."/>
            <person name="Davidsen T.M."/>
            <person name="Zafar N."/>
            <person name="White O."/>
            <person name="Tran B."/>
            <person name="Romero C."/>
            <person name="Forberger H.A."/>
            <person name="Weidman J.F."/>
            <person name="Khouri H.M."/>
            <person name="Feldblyum T.V."/>
            <person name="Utterback T.R."/>
            <person name="Van Aken S.E."/>
            <person name="Lovley D.R."/>
            <person name="Fraser C.M."/>
        </authorList>
    </citation>
    <scope>NUCLEOTIDE SEQUENCE [LARGE SCALE GENOMIC DNA]</scope>
    <source>
        <strain>ATCC 51573 / DSM 12127 / PCA</strain>
    </source>
</reference>
<name>PRMA_GEOSL</name>
<sequence>MDKQWAEVCCQVPAGLVDLLADFLVELSGNGVSIDNRALDTFTLDGIEELDTATVRAYFDPATDMAGQIAQIERFLGDNAAAFGGAPIPAPTVTLIRDEDWATGWRQHFVPTRIGRHLVIKPTWEPFAPEPGDQVIELDPGMAFGTGTHPTTRLCLEALETLGRPDRVLDVGTGSGILAIAAVRLGARQVIGTDIDPDAVIVAGENCALNGVEVELVTTPLALIPGRFDVVLANILAEDLVRMAGDLAAKVAAGGHLILSGILTEREAFVVEGFGRSGLALVAVSREGEWSCLVYRNEG</sequence>
<feature type="chain" id="PRO_0000192263" description="Ribosomal protein L11 methyltransferase">
    <location>
        <begin position="1"/>
        <end position="299"/>
    </location>
</feature>
<feature type="binding site" evidence="1">
    <location>
        <position position="152"/>
    </location>
    <ligand>
        <name>S-adenosyl-L-methionine</name>
        <dbReference type="ChEBI" id="CHEBI:59789"/>
    </ligand>
</feature>
<feature type="binding site" evidence="1">
    <location>
        <position position="172"/>
    </location>
    <ligand>
        <name>S-adenosyl-L-methionine</name>
        <dbReference type="ChEBI" id="CHEBI:59789"/>
    </ligand>
</feature>
<feature type="binding site" evidence="1">
    <location>
        <position position="194"/>
    </location>
    <ligand>
        <name>S-adenosyl-L-methionine</name>
        <dbReference type="ChEBI" id="CHEBI:59789"/>
    </ligand>
</feature>
<feature type="binding site" evidence="1">
    <location>
        <position position="234"/>
    </location>
    <ligand>
        <name>S-adenosyl-L-methionine</name>
        <dbReference type="ChEBI" id="CHEBI:59789"/>
    </ligand>
</feature>
<dbReference type="EC" id="2.1.1.-" evidence="1"/>
<dbReference type="EMBL" id="AE017180">
    <property type="protein sequence ID" value="AAR33779.1"/>
    <property type="molecule type" value="Genomic_DNA"/>
</dbReference>
<dbReference type="RefSeq" id="NP_951506.1">
    <property type="nucleotide sequence ID" value="NC_002939.5"/>
</dbReference>
<dbReference type="RefSeq" id="WP_010941115.1">
    <property type="nucleotide sequence ID" value="NC_002939.5"/>
</dbReference>
<dbReference type="SMR" id="Q74G05"/>
<dbReference type="FunCoup" id="Q74G05">
    <property type="interactions" value="445"/>
</dbReference>
<dbReference type="STRING" id="243231.GSU0447"/>
<dbReference type="EnsemblBacteria" id="AAR33779">
    <property type="protein sequence ID" value="AAR33779"/>
    <property type="gene ID" value="GSU0447"/>
</dbReference>
<dbReference type="KEGG" id="gsu:GSU0447"/>
<dbReference type="PATRIC" id="fig|243231.5.peg.445"/>
<dbReference type="eggNOG" id="COG2264">
    <property type="taxonomic scope" value="Bacteria"/>
</dbReference>
<dbReference type="HOGENOM" id="CLU_049382_0_1_7"/>
<dbReference type="InParanoid" id="Q74G05"/>
<dbReference type="OrthoDB" id="9785995at2"/>
<dbReference type="Proteomes" id="UP000000577">
    <property type="component" value="Chromosome"/>
</dbReference>
<dbReference type="GO" id="GO:0005737">
    <property type="term" value="C:cytoplasm"/>
    <property type="evidence" value="ECO:0007669"/>
    <property type="project" value="UniProtKB-SubCell"/>
</dbReference>
<dbReference type="GO" id="GO:0008276">
    <property type="term" value="F:protein methyltransferase activity"/>
    <property type="evidence" value="ECO:0000318"/>
    <property type="project" value="GO_Central"/>
</dbReference>
<dbReference type="GO" id="GO:0016279">
    <property type="term" value="F:protein-lysine N-methyltransferase activity"/>
    <property type="evidence" value="ECO:0007669"/>
    <property type="project" value="RHEA"/>
</dbReference>
<dbReference type="GO" id="GO:0032259">
    <property type="term" value="P:methylation"/>
    <property type="evidence" value="ECO:0007669"/>
    <property type="project" value="UniProtKB-KW"/>
</dbReference>
<dbReference type="CDD" id="cd02440">
    <property type="entry name" value="AdoMet_MTases"/>
    <property type="match status" value="1"/>
</dbReference>
<dbReference type="Gene3D" id="3.40.50.150">
    <property type="entry name" value="Vaccinia Virus protein VP39"/>
    <property type="match status" value="1"/>
</dbReference>
<dbReference type="HAMAP" id="MF_00735">
    <property type="entry name" value="Methyltr_PrmA"/>
    <property type="match status" value="1"/>
</dbReference>
<dbReference type="InterPro" id="IPR050078">
    <property type="entry name" value="Ribosomal_L11_MeTrfase_PrmA"/>
</dbReference>
<dbReference type="InterPro" id="IPR004498">
    <property type="entry name" value="Ribosomal_PrmA_MeTrfase"/>
</dbReference>
<dbReference type="InterPro" id="IPR029063">
    <property type="entry name" value="SAM-dependent_MTases_sf"/>
</dbReference>
<dbReference type="NCBIfam" id="TIGR00406">
    <property type="entry name" value="prmA"/>
    <property type="match status" value="1"/>
</dbReference>
<dbReference type="PANTHER" id="PTHR43648">
    <property type="entry name" value="ELECTRON TRANSFER FLAVOPROTEIN BETA SUBUNIT LYSINE METHYLTRANSFERASE"/>
    <property type="match status" value="1"/>
</dbReference>
<dbReference type="PANTHER" id="PTHR43648:SF1">
    <property type="entry name" value="ELECTRON TRANSFER FLAVOPROTEIN BETA SUBUNIT LYSINE METHYLTRANSFERASE"/>
    <property type="match status" value="1"/>
</dbReference>
<dbReference type="Pfam" id="PF06325">
    <property type="entry name" value="PrmA"/>
    <property type="match status" value="1"/>
</dbReference>
<dbReference type="PIRSF" id="PIRSF000401">
    <property type="entry name" value="RPL11_MTase"/>
    <property type="match status" value="1"/>
</dbReference>
<dbReference type="SUPFAM" id="SSF53335">
    <property type="entry name" value="S-adenosyl-L-methionine-dependent methyltransferases"/>
    <property type="match status" value="1"/>
</dbReference>
<accession>Q74G05</accession>
<protein>
    <recommendedName>
        <fullName evidence="1">Ribosomal protein L11 methyltransferase</fullName>
        <shortName evidence="1">L11 Mtase</shortName>
        <ecNumber evidence="1">2.1.1.-</ecNumber>
    </recommendedName>
</protein>
<gene>
    <name evidence="1" type="primary">prmA</name>
    <name type="ordered locus">GSU0447</name>
</gene>
<comment type="function">
    <text evidence="1">Methylates ribosomal protein L11.</text>
</comment>
<comment type="catalytic activity">
    <reaction evidence="1">
        <text>L-lysyl-[protein] + 3 S-adenosyl-L-methionine = N(6),N(6),N(6)-trimethyl-L-lysyl-[protein] + 3 S-adenosyl-L-homocysteine + 3 H(+)</text>
        <dbReference type="Rhea" id="RHEA:54192"/>
        <dbReference type="Rhea" id="RHEA-COMP:9752"/>
        <dbReference type="Rhea" id="RHEA-COMP:13826"/>
        <dbReference type="ChEBI" id="CHEBI:15378"/>
        <dbReference type="ChEBI" id="CHEBI:29969"/>
        <dbReference type="ChEBI" id="CHEBI:57856"/>
        <dbReference type="ChEBI" id="CHEBI:59789"/>
        <dbReference type="ChEBI" id="CHEBI:61961"/>
    </reaction>
</comment>
<comment type="subcellular location">
    <subcellularLocation>
        <location evidence="1">Cytoplasm</location>
    </subcellularLocation>
</comment>
<comment type="similarity">
    <text evidence="1">Belongs to the methyltransferase superfamily. PrmA family.</text>
</comment>
<evidence type="ECO:0000255" key="1">
    <source>
        <dbReference type="HAMAP-Rule" id="MF_00735"/>
    </source>
</evidence>
<organism>
    <name type="scientific">Geobacter sulfurreducens (strain ATCC 51573 / DSM 12127 / PCA)</name>
    <dbReference type="NCBI Taxonomy" id="243231"/>
    <lineage>
        <taxon>Bacteria</taxon>
        <taxon>Pseudomonadati</taxon>
        <taxon>Thermodesulfobacteriota</taxon>
        <taxon>Desulfuromonadia</taxon>
        <taxon>Geobacterales</taxon>
        <taxon>Geobacteraceae</taxon>
        <taxon>Geobacter</taxon>
    </lineage>
</organism>
<proteinExistence type="inferred from homology"/>
<keyword id="KW-0963">Cytoplasm</keyword>
<keyword id="KW-0489">Methyltransferase</keyword>
<keyword id="KW-1185">Reference proteome</keyword>
<keyword id="KW-0949">S-adenosyl-L-methionine</keyword>
<keyword id="KW-0808">Transferase</keyword>